<keyword id="KW-0131">Cell cycle</keyword>
<keyword id="KW-0132">Cell division</keyword>
<keyword id="KW-0143">Chaperone</keyword>
<keyword id="KW-0963">Cytoplasm</keyword>
<keyword id="KW-0413">Isomerase</keyword>
<keyword id="KW-1185">Reference proteome</keyword>
<keyword id="KW-0697">Rotamase</keyword>
<organism>
    <name type="scientific">Polaromonas sp. (strain JS666 / ATCC BAA-500)</name>
    <dbReference type="NCBI Taxonomy" id="296591"/>
    <lineage>
        <taxon>Bacteria</taxon>
        <taxon>Pseudomonadati</taxon>
        <taxon>Pseudomonadota</taxon>
        <taxon>Betaproteobacteria</taxon>
        <taxon>Burkholderiales</taxon>
        <taxon>Comamonadaceae</taxon>
        <taxon>Polaromonas</taxon>
    </lineage>
</organism>
<feature type="chain" id="PRO_0000256587" description="Trigger factor">
    <location>
        <begin position="1"/>
        <end position="436"/>
    </location>
</feature>
<feature type="domain" description="PPIase FKBP-type" evidence="1">
    <location>
        <begin position="163"/>
        <end position="248"/>
    </location>
</feature>
<comment type="function">
    <text evidence="1">Involved in protein export. Acts as a chaperone by maintaining the newly synthesized protein in an open conformation. Functions as a peptidyl-prolyl cis-trans isomerase.</text>
</comment>
<comment type="catalytic activity">
    <reaction evidence="1">
        <text>[protein]-peptidylproline (omega=180) = [protein]-peptidylproline (omega=0)</text>
        <dbReference type="Rhea" id="RHEA:16237"/>
        <dbReference type="Rhea" id="RHEA-COMP:10747"/>
        <dbReference type="Rhea" id="RHEA-COMP:10748"/>
        <dbReference type="ChEBI" id="CHEBI:83833"/>
        <dbReference type="ChEBI" id="CHEBI:83834"/>
        <dbReference type="EC" id="5.2.1.8"/>
    </reaction>
</comment>
<comment type="subcellular location">
    <subcellularLocation>
        <location>Cytoplasm</location>
    </subcellularLocation>
    <text evidence="1">About half TF is bound to the ribosome near the polypeptide exit tunnel while the other half is free in the cytoplasm.</text>
</comment>
<comment type="domain">
    <text evidence="1">Consists of 3 domains; the N-terminus binds the ribosome, the middle domain has PPIase activity, while the C-terminus has intrinsic chaperone activity on its own.</text>
</comment>
<comment type="similarity">
    <text evidence="1">Belongs to the FKBP-type PPIase family. Tig subfamily.</text>
</comment>
<protein>
    <recommendedName>
        <fullName evidence="1">Trigger factor</fullName>
        <shortName evidence="1">TF</shortName>
        <ecNumber evidence="1">5.2.1.8</ecNumber>
    </recommendedName>
    <alternativeName>
        <fullName evidence="1">PPIase</fullName>
    </alternativeName>
</protein>
<proteinExistence type="inferred from homology"/>
<dbReference type="EC" id="5.2.1.8" evidence="1"/>
<dbReference type="EMBL" id="CP000316">
    <property type="protein sequence ID" value="ABE43959.1"/>
    <property type="molecule type" value="Genomic_DNA"/>
</dbReference>
<dbReference type="RefSeq" id="WP_011482958.1">
    <property type="nucleotide sequence ID" value="NC_007948.1"/>
</dbReference>
<dbReference type="SMR" id="Q12BY3"/>
<dbReference type="STRING" id="296591.Bpro_2029"/>
<dbReference type="KEGG" id="pol:Bpro_2029"/>
<dbReference type="eggNOG" id="COG0544">
    <property type="taxonomic scope" value="Bacteria"/>
</dbReference>
<dbReference type="HOGENOM" id="CLU_033058_2_0_4"/>
<dbReference type="OrthoDB" id="9767721at2"/>
<dbReference type="Proteomes" id="UP000001983">
    <property type="component" value="Chromosome"/>
</dbReference>
<dbReference type="GO" id="GO:0005737">
    <property type="term" value="C:cytoplasm"/>
    <property type="evidence" value="ECO:0007669"/>
    <property type="project" value="UniProtKB-SubCell"/>
</dbReference>
<dbReference type="GO" id="GO:0003755">
    <property type="term" value="F:peptidyl-prolyl cis-trans isomerase activity"/>
    <property type="evidence" value="ECO:0007669"/>
    <property type="project" value="UniProtKB-UniRule"/>
</dbReference>
<dbReference type="GO" id="GO:0044183">
    <property type="term" value="F:protein folding chaperone"/>
    <property type="evidence" value="ECO:0007669"/>
    <property type="project" value="TreeGrafter"/>
</dbReference>
<dbReference type="GO" id="GO:0043022">
    <property type="term" value="F:ribosome binding"/>
    <property type="evidence" value="ECO:0007669"/>
    <property type="project" value="TreeGrafter"/>
</dbReference>
<dbReference type="GO" id="GO:0051083">
    <property type="term" value="P:'de novo' cotranslational protein folding"/>
    <property type="evidence" value="ECO:0007669"/>
    <property type="project" value="TreeGrafter"/>
</dbReference>
<dbReference type="GO" id="GO:0051301">
    <property type="term" value="P:cell division"/>
    <property type="evidence" value="ECO:0007669"/>
    <property type="project" value="UniProtKB-KW"/>
</dbReference>
<dbReference type="GO" id="GO:0061077">
    <property type="term" value="P:chaperone-mediated protein folding"/>
    <property type="evidence" value="ECO:0007669"/>
    <property type="project" value="TreeGrafter"/>
</dbReference>
<dbReference type="GO" id="GO:0015031">
    <property type="term" value="P:protein transport"/>
    <property type="evidence" value="ECO:0007669"/>
    <property type="project" value="UniProtKB-UniRule"/>
</dbReference>
<dbReference type="GO" id="GO:0043335">
    <property type="term" value="P:protein unfolding"/>
    <property type="evidence" value="ECO:0007669"/>
    <property type="project" value="TreeGrafter"/>
</dbReference>
<dbReference type="FunFam" id="3.10.50.40:FF:000001">
    <property type="entry name" value="Trigger factor"/>
    <property type="match status" value="1"/>
</dbReference>
<dbReference type="Gene3D" id="3.10.50.40">
    <property type="match status" value="1"/>
</dbReference>
<dbReference type="Gene3D" id="3.30.70.1050">
    <property type="entry name" value="Trigger factor ribosome-binding domain"/>
    <property type="match status" value="1"/>
</dbReference>
<dbReference type="Gene3D" id="1.10.3120.10">
    <property type="entry name" value="Trigger factor, C-terminal domain"/>
    <property type="match status" value="1"/>
</dbReference>
<dbReference type="HAMAP" id="MF_00303">
    <property type="entry name" value="Trigger_factor_Tig"/>
    <property type="match status" value="1"/>
</dbReference>
<dbReference type="InterPro" id="IPR046357">
    <property type="entry name" value="PPIase_dom_sf"/>
</dbReference>
<dbReference type="InterPro" id="IPR001179">
    <property type="entry name" value="PPIase_FKBP_dom"/>
</dbReference>
<dbReference type="InterPro" id="IPR005215">
    <property type="entry name" value="Trig_fac"/>
</dbReference>
<dbReference type="InterPro" id="IPR008880">
    <property type="entry name" value="Trigger_fac_C"/>
</dbReference>
<dbReference type="InterPro" id="IPR037041">
    <property type="entry name" value="Trigger_fac_C_sf"/>
</dbReference>
<dbReference type="InterPro" id="IPR008881">
    <property type="entry name" value="Trigger_fac_ribosome-bd_bac"/>
</dbReference>
<dbReference type="InterPro" id="IPR036611">
    <property type="entry name" value="Trigger_fac_ribosome-bd_sf"/>
</dbReference>
<dbReference type="InterPro" id="IPR027304">
    <property type="entry name" value="Trigger_fact/SurA_dom_sf"/>
</dbReference>
<dbReference type="NCBIfam" id="TIGR00115">
    <property type="entry name" value="tig"/>
    <property type="match status" value="1"/>
</dbReference>
<dbReference type="PANTHER" id="PTHR30560">
    <property type="entry name" value="TRIGGER FACTOR CHAPERONE AND PEPTIDYL-PROLYL CIS/TRANS ISOMERASE"/>
    <property type="match status" value="1"/>
</dbReference>
<dbReference type="PANTHER" id="PTHR30560:SF3">
    <property type="entry name" value="TRIGGER FACTOR-LIKE PROTEIN TIG, CHLOROPLASTIC"/>
    <property type="match status" value="1"/>
</dbReference>
<dbReference type="Pfam" id="PF00254">
    <property type="entry name" value="FKBP_C"/>
    <property type="match status" value="1"/>
</dbReference>
<dbReference type="Pfam" id="PF05698">
    <property type="entry name" value="Trigger_C"/>
    <property type="match status" value="1"/>
</dbReference>
<dbReference type="Pfam" id="PF05697">
    <property type="entry name" value="Trigger_N"/>
    <property type="match status" value="1"/>
</dbReference>
<dbReference type="PIRSF" id="PIRSF003095">
    <property type="entry name" value="Trigger_factor"/>
    <property type="match status" value="1"/>
</dbReference>
<dbReference type="SUPFAM" id="SSF54534">
    <property type="entry name" value="FKBP-like"/>
    <property type="match status" value="1"/>
</dbReference>
<dbReference type="SUPFAM" id="SSF109998">
    <property type="entry name" value="Triger factor/SurA peptide-binding domain-like"/>
    <property type="match status" value="1"/>
</dbReference>
<dbReference type="SUPFAM" id="SSF102735">
    <property type="entry name" value="Trigger factor ribosome-binding domain"/>
    <property type="match status" value="1"/>
</dbReference>
<dbReference type="PROSITE" id="PS50059">
    <property type="entry name" value="FKBP_PPIASE"/>
    <property type="match status" value="1"/>
</dbReference>
<accession>Q12BY3</accession>
<reference key="1">
    <citation type="journal article" date="2008" name="Appl. Environ. Microbiol.">
        <title>The genome of Polaromonas sp. strain JS666: insights into the evolution of a hydrocarbon- and xenobiotic-degrading bacterium, and features of relevance to biotechnology.</title>
        <authorList>
            <person name="Mattes T.E."/>
            <person name="Alexander A.K."/>
            <person name="Richardson P.M."/>
            <person name="Munk A.C."/>
            <person name="Han C.S."/>
            <person name="Stothard P."/>
            <person name="Coleman N.V."/>
        </authorList>
    </citation>
    <scope>NUCLEOTIDE SEQUENCE [LARGE SCALE GENOMIC DNA]</scope>
    <source>
        <strain>JS666 / ATCC BAA-500</strain>
    </source>
</reference>
<name>TIG_POLSJ</name>
<evidence type="ECO:0000255" key="1">
    <source>
        <dbReference type="HAMAP-Rule" id="MF_00303"/>
    </source>
</evidence>
<sequence>MAVTVETLEKLERKMTLTLPLNTIQSEVDTRLKRLARTVKMDGFRPGKVPMNVVAQRYGYSVHYEVMNDKVGEAFAVAANEAKLRVAGQPRISEKEGAPEGELVFDAVFEVYPDVKIADLTQAEVEKVSAEVSDAAIDKTVDILRKQRRTFAQRAADAPAQDGDRATIDFEGKIDGETFAGGKAEDFQFLVGEGQMLKEFEDAVRGMKSGESKTFPLNFPADYHGKDVAGKQADFLVTVKKIEAAHLPEVNEALAKSLGIADGTVEALRADIKKNLEREVKFRLLARNKNAVMDALVANAELELPKSSVQAEVDRMIEGARADLKQRGIKDADKAPIPDDVFRPQAEKRVRLGLVVAELVRANGLQAKPEQLKAHIEELAASYEKPQDVVRWYLGDNRRMAEVEAVVIENNVTEFVLGKAKVNDKAISFDDLMGQN</sequence>
<gene>
    <name evidence="1" type="primary">tig</name>
    <name type="ordered locus">Bpro_2029</name>
</gene>